<evidence type="ECO:0000250" key="1"/>
<evidence type="ECO:0000250" key="2">
    <source>
        <dbReference type="UniProtKB" id="Q9Y2U5"/>
    </source>
</evidence>
<evidence type="ECO:0000255" key="3">
    <source>
        <dbReference type="PROSITE-ProRule" id="PRU00159"/>
    </source>
</evidence>
<evidence type="ECO:0000255" key="4">
    <source>
        <dbReference type="PROSITE-ProRule" id="PRU01081"/>
    </source>
</evidence>
<evidence type="ECO:0000256" key="5">
    <source>
        <dbReference type="SAM" id="MobiDB-lite"/>
    </source>
</evidence>
<evidence type="ECO:0000269" key="6">
    <source>
    </source>
</evidence>
<evidence type="ECO:0000305" key="7"/>
<evidence type="ECO:0007744" key="8">
    <source>
    </source>
</evidence>
<evidence type="ECO:0007744" key="9">
    <source>
    </source>
</evidence>
<reference key="1">
    <citation type="journal article" date="1996" name="J. Biol. Chem.">
        <title>Molecular cloning of mitogen-activated protein/ERK kinase kinases (MEKK) 2 and 3. Regulation of sequential phosphorylation pathways involving mitogen-activated protein kinase and c-Jun kinase.</title>
        <authorList>
            <person name="Blank J.L."/>
            <person name="Gerwins P."/>
            <person name="Elliott E.M."/>
            <person name="Sather S."/>
            <person name="Johnson G.L."/>
        </authorList>
    </citation>
    <scope>NUCLEOTIDE SEQUENCE [MRNA]</scope>
    <source>
        <tissue>Brain</tissue>
    </source>
</reference>
<reference key="2">
    <citation type="journal article" date="2000" name="J. Biol. Chem.">
        <title>MEK kinase 2 binds and activates protein kinase C-related kinase 2. Bifurcation of kinase regulatory pathways at the level of an MAPK kinase kinase.</title>
        <authorList>
            <person name="Sun W."/>
            <person name="Vincent S."/>
            <person name="Settleman J."/>
            <person name="Johnson G.L."/>
        </authorList>
    </citation>
    <scope>INTERACTION WITH PKN2</scope>
</reference>
<reference key="3">
    <citation type="journal article" date="2003" name="Biochem. Biophys. Res. Commun.">
        <title>Mutations in protein kinase subdomain X differentially affect MEKK2 and MEKK1 activity.</title>
        <authorList>
            <person name="Huang J."/>
            <person name="Tu Z."/>
            <person name="Lee F.S."/>
        </authorList>
    </citation>
    <scope>FUNCTION</scope>
    <scope>AUTOPHOSPHORYLATION</scope>
    <scope>MUTAGENESIS OF PHE-571; ILE-573; THR-575; GLN-576; PRO-577; PRO-580; LEU-582; PRO-583 AND VAL-586</scope>
</reference>
<reference key="4">
    <citation type="journal article" date="2003" name="J. Biol. Chem.">
        <title>PB1 domains of MEKK2 and MEKK3 interact with the MEK5 PB1 domain for activation of the ERK5 pathway.</title>
        <authorList>
            <person name="Nakamura K."/>
            <person name="Johnson G.L."/>
        </authorList>
    </citation>
    <scope>INTERACTION WITH MAP2K5</scope>
</reference>
<reference key="5">
    <citation type="journal article" date="2007" name="Proc. Natl. Acad. Sci. U.S.A.">
        <title>Large-scale phosphorylation analysis of mouse liver.</title>
        <authorList>
            <person name="Villen J."/>
            <person name="Beausoleil S.A."/>
            <person name="Gerber S.A."/>
            <person name="Gygi S.P."/>
        </authorList>
    </citation>
    <scope>PHOSPHORYLATION [LARGE SCALE ANALYSIS] AT SER-331</scope>
    <scope>IDENTIFICATION BY MASS SPECTROMETRY [LARGE SCALE ANALYSIS]</scope>
    <source>
        <tissue>Liver</tissue>
    </source>
</reference>
<reference key="6">
    <citation type="journal article" date="2010" name="Cell">
        <title>A tissue-specific atlas of mouse protein phosphorylation and expression.</title>
        <authorList>
            <person name="Huttlin E.L."/>
            <person name="Jedrychowski M.P."/>
            <person name="Elias J.E."/>
            <person name="Goswami T."/>
            <person name="Rad R."/>
            <person name="Beausoleil S.A."/>
            <person name="Villen J."/>
            <person name="Haas W."/>
            <person name="Sowa M.E."/>
            <person name="Gygi S.P."/>
        </authorList>
    </citation>
    <scope>PHOSPHORYLATION [LARGE SCALE ANALYSIS] AT SER-239; SER-331; SER-344 AND SER-349</scope>
    <scope>IDENTIFICATION BY MASS SPECTROMETRY [LARGE SCALE ANALYSIS]</scope>
    <source>
        <tissue>Brain</tissue>
        <tissue>Kidney</tissue>
        <tissue>Lung</tissue>
        <tissue>Pancreas</tissue>
        <tissue>Spleen</tissue>
        <tissue>Testis</tissue>
    </source>
</reference>
<sequence>MDDQQALNSIMQDLAVLHKASRPALSLQETRKAKPSSPKKQNDVRVKFEHRGEKRILQVTRPVKLEDLRSKSKIAFGQSMDLHYTNNELVIPLTTQDDLDKAVELLDRSIHMKSLKILLVVNGSTQATNLEPSPSPEDLNNTPLGAERKKRLSVVGPPNRDRSSPPPGYIPDILHQIARNGSFTSINSEGEFIPESMDQMLDPLSLSSPENSGSGSCPSLDSPLDGESYPKSRMPRAQSYPDNHQEFTDYDNPIFEKFGKGGTYPRRYHVSYHHQEYNDGRKTFPRARRTQGTSFRSPVSFSPTDHSLSTSSGSSVFTPEYDDSRIRRRGSDIDNPTLTVTDISPPSRSPRAPTNWRLGKLLGQGAFGRVYLCYDVDTGRELAVKQVQFNPESPETSKEVNALECEIQLLKNLLHERIVQYYGCLRDPQEKTLSIFMELSPGGSIKDQLKAYGALTENVTRKYTRQILEGVHYLHSNMIVHRDIKGANILRDSTGNIKLGDFGASKRLQTICLSGTGMKSVTGTPYWMSPEVISGEGYGRKADIWSVACTVVEMLTEKPPWAEFEAMAAIFKIATQPTNPKLPPHVSDYTRDFLKRIFVEAKLRPSAEELLRHMFVHYH</sequence>
<feature type="chain" id="PRO_0000086244" description="Mitogen-activated protein kinase kinase kinase 2">
    <location>
        <begin position="1"/>
        <end position="619"/>
    </location>
</feature>
<feature type="domain" description="PB1" evidence="4">
    <location>
        <begin position="43"/>
        <end position="122"/>
    </location>
</feature>
<feature type="domain" description="Protein kinase" evidence="3">
    <location>
        <begin position="356"/>
        <end position="616"/>
    </location>
</feature>
<feature type="region of interest" description="Disordered" evidence="5">
    <location>
        <begin position="25"/>
        <end position="44"/>
    </location>
</feature>
<feature type="region of interest" description="Disordered" evidence="5">
    <location>
        <begin position="126"/>
        <end position="168"/>
    </location>
</feature>
<feature type="region of interest" description="Disordered" evidence="5">
    <location>
        <begin position="201"/>
        <end position="245"/>
    </location>
</feature>
<feature type="region of interest" description="Disordered" evidence="5">
    <location>
        <begin position="289"/>
        <end position="355"/>
    </location>
</feature>
<feature type="compositionally biased region" description="Polar residues" evidence="5">
    <location>
        <begin position="126"/>
        <end position="143"/>
    </location>
</feature>
<feature type="compositionally biased region" description="Low complexity" evidence="5">
    <location>
        <begin position="203"/>
        <end position="219"/>
    </location>
</feature>
<feature type="compositionally biased region" description="Polar residues" evidence="5">
    <location>
        <begin position="290"/>
        <end position="299"/>
    </location>
</feature>
<feature type="compositionally biased region" description="Low complexity" evidence="5">
    <location>
        <begin position="300"/>
        <end position="315"/>
    </location>
</feature>
<feature type="compositionally biased region" description="Basic and acidic residues" evidence="5">
    <location>
        <begin position="322"/>
        <end position="332"/>
    </location>
</feature>
<feature type="compositionally biased region" description="Polar residues" evidence="5">
    <location>
        <begin position="336"/>
        <end position="346"/>
    </location>
</feature>
<feature type="active site" description="Proton acceptor" evidence="3">
    <location>
        <position position="483"/>
    </location>
</feature>
<feature type="binding site" evidence="3">
    <location>
        <begin position="362"/>
        <end position="370"/>
    </location>
    <ligand>
        <name>ATP</name>
        <dbReference type="ChEBI" id="CHEBI:30616"/>
    </ligand>
</feature>
<feature type="binding site" evidence="3">
    <location>
        <position position="385"/>
    </location>
    <ligand>
        <name>ATP</name>
        <dbReference type="ChEBI" id="CHEBI:30616"/>
    </ligand>
</feature>
<feature type="modified residue" description="Phosphoserine" evidence="2">
    <location>
        <position position="26"/>
    </location>
</feature>
<feature type="modified residue" description="Phosphoserine" evidence="2">
    <location>
        <position position="153"/>
    </location>
</feature>
<feature type="modified residue" description="Phosphoserine" evidence="2">
    <location>
        <position position="164"/>
    </location>
</feature>
<feature type="modified residue" description="Phosphoserine" evidence="9">
    <location>
        <position position="239"/>
    </location>
</feature>
<feature type="modified residue" description="Phosphoserine" evidence="2">
    <location>
        <position position="297"/>
    </location>
</feature>
<feature type="modified residue" description="Phosphoserine" evidence="2">
    <location>
        <position position="311"/>
    </location>
</feature>
<feature type="modified residue" description="Phosphoserine" evidence="8 9">
    <location>
        <position position="331"/>
    </location>
</feature>
<feature type="modified residue" description="Phosphoserine" evidence="9">
    <location>
        <position position="344"/>
    </location>
</feature>
<feature type="modified residue" description="Phosphoserine" evidence="9">
    <location>
        <position position="349"/>
    </location>
</feature>
<feature type="mutagenesis site" description="No effect on autophosphorylation. Fails to induce activation of the AP-1 transcription factor, MAPK7 or MAPK8." evidence="6">
    <original>F</original>
    <variation>A</variation>
    <location>
        <position position="571"/>
    </location>
</feature>
<feature type="mutagenesis site" description="Loss of autophosphorylation. Fails to induce activation of the AP-1 transcription factor, MAPK7 or MAPK8." evidence="6">
    <original>I</original>
    <variation>A</variation>
    <location>
        <position position="573"/>
    </location>
</feature>
<feature type="mutagenesis site" description="Loss of autophosphorylation and fails to induce activation of the AP-1 transcription factor, MAPK7 or MAPK8; when associated with A-575 and A-576." evidence="6">
    <original>T</original>
    <variation>A</variation>
    <location>
        <position position="575"/>
    </location>
</feature>
<feature type="mutagenesis site" description="Loss of autophosphorylation and fails to induce activation of the AP-1 transcription factor, MAPK7 or MAPK8; when associated with A-574 and A-576." evidence="6">
    <original>Q</original>
    <variation>A</variation>
    <location>
        <position position="576"/>
    </location>
</feature>
<feature type="mutagenesis site" description="Loss of autophosphorylation and fails to induce activation of the AP-1 transcription factor, MAPK7 or MAPK8; when associated with A-575 and A-576." evidence="6">
    <original>P</original>
    <variation>A</variation>
    <location>
        <position position="577"/>
    </location>
</feature>
<feature type="mutagenesis site" description="Loss of autophosphorylation." evidence="6">
    <original>P</original>
    <variation>A</variation>
    <location>
        <position position="580"/>
    </location>
</feature>
<feature type="mutagenesis site" description="No effect on autophosphorylation and AP-1 transcription factor, MAPK7 or MAPK8 activity. Fails to induce activation and loss of autophosphorylation; when associated with A-582." evidence="6">
    <original>L</original>
    <variation>A</variation>
    <location>
        <position position="582"/>
    </location>
</feature>
<feature type="mutagenesis site" description="No effect on autophosphorylation and AP-1 transcription factor, MAPK7 or MAPK8 activity. Fails to induce activation and loss of autophosphorylation; when associated with A-581." evidence="6">
    <original>P</original>
    <variation>A</variation>
    <location>
        <position position="583"/>
    </location>
</feature>
<feature type="mutagenesis site" description="No effect on AP-1 transcription factor activity." evidence="6">
    <original>V</original>
    <variation>A</variation>
    <location>
        <position position="586"/>
    </location>
</feature>
<organism>
    <name type="scientific">Mus musculus</name>
    <name type="common">Mouse</name>
    <dbReference type="NCBI Taxonomy" id="10090"/>
    <lineage>
        <taxon>Eukaryota</taxon>
        <taxon>Metazoa</taxon>
        <taxon>Chordata</taxon>
        <taxon>Craniata</taxon>
        <taxon>Vertebrata</taxon>
        <taxon>Euteleostomi</taxon>
        <taxon>Mammalia</taxon>
        <taxon>Eutheria</taxon>
        <taxon>Euarchontoglires</taxon>
        <taxon>Glires</taxon>
        <taxon>Rodentia</taxon>
        <taxon>Myomorpha</taxon>
        <taxon>Muroidea</taxon>
        <taxon>Muridae</taxon>
        <taxon>Murinae</taxon>
        <taxon>Mus</taxon>
        <taxon>Mus</taxon>
    </lineage>
</organism>
<name>M3K2_MOUSE</name>
<gene>
    <name type="primary">Map3k2</name>
    <name type="synonym">Mekk2</name>
</gene>
<proteinExistence type="evidence at protein level"/>
<dbReference type="EC" id="2.7.11.25"/>
<dbReference type="EMBL" id="U43186">
    <property type="protein sequence ID" value="AAB03536.1"/>
    <property type="status" value="ALT_FRAME"/>
    <property type="molecule type" value="mRNA"/>
</dbReference>
<dbReference type="CCDS" id="CCDS29117.1"/>
<dbReference type="SMR" id="Q61083"/>
<dbReference type="FunCoup" id="Q61083">
    <property type="interactions" value="3301"/>
</dbReference>
<dbReference type="IntAct" id="Q61083">
    <property type="interactions" value="2"/>
</dbReference>
<dbReference type="MINT" id="Q61083"/>
<dbReference type="STRING" id="10090.ENSMUSP00000094326"/>
<dbReference type="iPTMnet" id="Q61083"/>
<dbReference type="PhosphoSitePlus" id="Q61083"/>
<dbReference type="jPOST" id="Q61083"/>
<dbReference type="PaxDb" id="10090-ENSMUSP00000094326"/>
<dbReference type="PeptideAtlas" id="Q61083"/>
<dbReference type="ProteomicsDB" id="252699"/>
<dbReference type="Pumba" id="Q61083"/>
<dbReference type="ABCD" id="Q61083">
    <property type="antibodies" value="4 sequenced antibodies"/>
</dbReference>
<dbReference type="AGR" id="MGI:1346873"/>
<dbReference type="MGI" id="MGI:1346873">
    <property type="gene designation" value="Map3k2"/>
</dbReference>
<dbReference type="eggNOG" id="KOG0198">
    <property type="taxonomic scope" value="Eukaryota"/>
</dbReference>
<dbReference type="InParanoid" id="Q61083"/>
<dbReference type="PhylomeDB" id="Q61083"/>
<dbReference type="BRENDA" id="2.7.12.2">
    <property type="organism ID" value="3474"/>
</dbReference>
<dbReference type="ChiTaRS" id="Map3k2">
    <property type="organism name" value="mouse"/>
</dbReference>
<dbReference type="PRO" id="PR:Q61083"/>
<dbReference type="Proteomes" id="UP000000589">
    <property type="component" value="Unplaced"/>
</dbReference>
<dbReference type="RNAct" id="Q61083">
    <property type="molecule type" value="protein"/>
</dbReference>
<dbReference type="GO" id="GO:0005737">
    <property type="term" value="C:cytoplasm"/>
    <property type="evidence" value="ECO:0007669"/>
    <property type="project" value="UniProtKB-SubCell"/>
</dbReference>
<dbReference type="GO" id="GO:0005634">
    <property type="term" value="C:nucleus"/>
    <property type="evidence" value="ECO:0007669"/>
    <property type="project" value="UniProtKB-SubCell"/>
</dbReference>
<dbReference type="GO" id="GO:0005524">
    <property type="term" value="F:ATP binding"/>
    <property type="evidence" value="ECO:0007669"/>
    <property type="project" value="UniProtKB-KW"/>
</dbReference>
<dbReference type="GO" id="GO:0004709">
    <property type="term" value="F:MAP kinase kinase kinase activity"/>
    <property type="evidence" value="ECO:0007669"/>
    <property type="project" value="UniProtKB-EC"/>
</dbReference>
<dbReference type="GO" id="GO:0046872">
    <property type="term" value="F:metal ion binding"/>
    <property type="evidence" value="ECO:0007669"/>
    <property type="project" value="UniProtKB-KW"/>
</dbReference>
<dbReference type="GO" id="GO:0004672">
    <property type="term" value="F:protein kinase activity"/>
    <property type="evidence" value="ECO:0000266"/>
    <property type="project" value="MGI"/>
</dbReference>
<dbReference type="GO" id="GO:0106310">
    <property type="term" value="F:protein serine kinase activity"/>
    <property type="evidence" value="ECO:0007669"/>
    <property type="project" value="RHEA"/>
</dbReference>
<dbReference type="CDD" id="cd06405">
    <property type="entry name" value="PB1_Mekk2_3"/>
    <property type="match status" value="1"/>
</dbReference>
<dbReference type="CDD" id="cd06652">
    <property type="entry name" value="STKc_MEKK2"/>
    <property type="match status" value="1"/>
</dbReference>
<dbReference type="FunFam" id="1.10.510.10:FF:000071">
    <property type="entry name" value="Mitogen-activated protein kinase kinase kinase 3 isoform 2"/>
    <property type="match status" value="1"/>
</dbReference>
<dbReference type="FunFam" id="3.10.20.90:FF:000026">
    <property type="entry name" value="Mitogen-activated protein kinase kinase kinase 3 isoform 2"/>
    <property type="match status" value="1"/>
</dbReference>
<dbReference type="Gene3D" id="3.10.20.90">
    <property type="entry name" value="Phosphatidylinositol 3-kinase Catalytic Subunit, Chain A, domain 1"/>
    <property type="match status" value="1"/>
</dbReference>
<dbReference type="Gene3D" id="1.10.510.10">
    <property type="entry name" value="Transferase(Phosphotransferase) domain 1"/>
    <property type="match status" value="1"/>
</dbReference>
<dbReference type="InterPro" id="IPR011009">
    <property type="entry name" value="Kinase-like_dom_sf"/>
</dbReference>
<dbReference type="InterPro" id="IPR053793">
    <property type="entry name" value="PB1-like"/>
</dbReference>
<dbReference type="InterPro" id="IPR000270">
    <property type="entry name" value="PB1_dom"/>
</dbReference>
<dbReference type="InterPro" id="IPR034879">
    <property type="entry name" value="PB1_MEKK2/3"/>
</dbReference>
<dbReference type="InterPro" id="IPR000719">
    <property type="entry name" value="Prot_kinase_dom"/>
</dbReference>
<dbReference type="InterPro" id="IPR017441">
    <property type="entry name" value="Protein_kinase_ATP_BS"/>
</dbReference>
<dbReference type="PANTHER" id="PTHR11584:SF369">
    <property type="entry name" value="MITOGEN-ACTIVATED PROTEIN KINASE KINASE KINASE 19-RELATED"/>
    <property type="match status" value="1"/>
</dbReference>
<dbReference type="PANTHER" id="PTHR11584">
    <property type="entry name" value="SERINE/THREONINE PROTEIN KINASE"/>
    <property type="match status" value="1"/>
</dbReference>
<dbReference type="Pfam" id="PF00564">
    <property type="entry name" value="PB1"/>
    <property type="match status" value="1"/>
</dbReference>
<dbReference type="Pfam" id="PF00069">
    <property type="entry name" value="Pkinase"/>
    <property type="match status" value="1"/>
</dbReference>
<dbReference type="SMART" id="SM00666">
    <property type="entry name" value="PB1"/>
    <property type="match status" value="1"/>
</dbReference>
<dbReference type="SMART" id="SM00220">
    <property type="entry name" value="S_TKc"/>
    <property type="match status" value="1"/>
</dbReference>
<dbReference type="SUPFAM" id="SSF54277">
    <property type="entry name" value="CAD &amp; PB1 domains"/>
    <property type="match status" value="1"/>
</dbReference>
<dbReference type="SUPFAM" id="SSF56112">
    <property type="entry name" value="Protein kinase-like (PK-like)"/>
    <property type="match status" value="1"/>
</dbReference>
<dbReference type="PROSITE" id="PS51745">
    <property type="entry name" value="PB1"/>
    <property type="match status" value="1"/>
</dbReference>
<dbReference type="PROSITE" id="PS00107">
    <property type="entry name" value="PROTEIN_KINASE_ATP"/>
    <property type="match status" value="1"/>
</dbReference>
<dbReference type="PROSITE" id="PS50011">
    <property type="entry name" value="PROTEIN_KINASE_DOM"/>
    <property type="match status" value="1"/>
</dbReference>
<protein>
    <recommendedName>
        <fullName>Mitogen-activated protein kinase kinase kinase 2</fullName>
        <ecNumber>2.7.11.25</ecNumber>
    </recommendedName>
    <alternativeName>
        <fullName>MAPK/ERK kinase kinase 2</fullName>
        <shortName>MEK kinase 2</shortName>
        <shortName>MEKK 2</shortName>
    </alternativeName>
</protein>
<keyword id="KW-0067">ATP-binding</keyword>
<keyword id="KW-0963">Cytoplasm</keyword>
<keyword id="KW-0418">Kinase</keyword>
<keyword id="KW-0460">Magnesium</keyword>
<keyword id="KW-0479">Metal-binding</keyword>
<keyword id="KW-0547">Nucleotide-binding</keyword>
<keyword id="KW-0539">Nucleus</keyword>
<keyword id="KW-0597">Phosphoprotein</keyword>
<keyword id="KW-1185">Reference proteome</keyword>
<keyword id="KW-0723">Serine/threonine-protein kinase</keyword>
<keyword id="KW-0808">Transferase</keyword>
<keyword id="KW-0832">Ubl conjugation</keyword>
<accession>Q61083</accession>
<comment type="function">
    <text evidence="1 6">Component of a protein kinase signal transduction cascade. Regulates the JNK and ERK5 pathways by phosphorylating and activating MAP2K5 and MAP2K7. Plays a role in caveolae kiss-and-run dynamics (By similarity).</text>
</comment>
<comment type="catalytic activity">
    <reaction>
        <text>L-seryl-[protein] + ATP = O-phospho-L-seryl-[protein] + ADP + H(+)</text>
        <dbReference type="Rhea" id="RHEA:17989"/>
        <dbReference type="Rhea" id="RHEA-COMP:9863"/>
        <dbReference type="Rhea" id="RHEA-COMP:11604"/>
        <dbReference type="ChEBI" id="CHEBI:15378"/>
        <dbReference type="ChEBI" id="CHEBI:29999"/>
        <dbReference type="ChEBI" id="CHEBI:30616"/>
        <dbReference type="ChEBI" id="CHEBI:83421"/>
        <dbReference type="ChEBI" id="CHEBI:456216"/>
        <dbReference type="EC" id="2.7.11.25"/>
    </reaction>
</comment>
<comment type="catalytic activity">
    <reaction>
        <text>L-threonyl-[protein] + ATP = O-phospho-L-threonyl-[protein] + ADP + H(+)</text>
        <dbReference type="Rhea" id="RHEA:46608"/>
        <dbReference type="Rhea" id="RHEA-COMP:11060"/>
        <dbReference type="Rhea" id="RHEA-COMP:11605"/>
        <dbReference type="ChEBI" id="CHEBI:15378"/>
        <dbReference type="ChEBI" id="CHEBI:30013"/>
        <dbReference type="ChEBI" id="CHEBI:30616"/>
        <dbReference type="ChEBI" id="CHEBI:61977"/>
        <dbReference type="ChEBI" id="CHEBI:456216"/>
        <dbReference type="EC" id="2.7.11.25"/>
    </reaction>
</comment>
<comment type="cofactor">
    <cofactor>
        <name>Mg(2+)</name>
        <dbReference type="ChEBI" id="CHEBI:18420"/>
    </cofactor>
</comment>
<comment type="activity regulation">
    <text evidence="1">Activated by phosphorylation on Thr-524 (By similarity). Interacts with PKN2; the interaction activates PKN2 kinase activity in a MAP3K2-independent kinase activity.</text>
</comment>
<comment type="subunit">
    <text evidence="1">Self-associates (By similarity). Binds both upstream activators and downstream substrates in multimolecular complexes. Interacts (via the kinase catalytic domain) with STK38 (By similarity). Interacts with XIAP/BIRC4 (By similarity).</text>
</comment>
<comment type="interaction">
    <interactant intactId="EBI-446134">
        <id>Q61083</id>
    </interactant>
    <interactant intactId="EBI-446144">
        <id>Q9WVS7</id>
        <label>Map2k5</label>
    </interactant>
    <organismsDiffer>false</organismsDiffer>
    <experiments>4</experiments>
</comment>
<comment type="subcellular location">
    <subcellularLocation>
        <location>Cytoplasm</location>
    </subcellularLocation>
    <subcellularLocation>
        <location>Nucleus</location>
    </subcellularLocation>
    <text>Upon EGF stimulation, translocates into the nucleus.</text>
</comment>
<comment type="PTM">
    <text evidence="1">Ubiquitination by XIAP/BIRC4 does not lead to proteasomal degradation.</text>
</comment>
<comment type="PTM">
    <text>Autophosphorylated.</text>
</comment>
<comment type="similarity">
    <text evidence="7">Belongs to the protein kinase superfamily. STE Ser/Thr protein kinase family. MAP kinase kinase kinase subfamily.</text>
</comment>
<comment type="sequence caution" evidence="7">
    <conflict type="frameshift">
        <sequence resource="EMBL-CDS" id="AAB03536"/>
    </conflict>
</comment>